<accession>P25080</accession>
<keyword id="KW-0002">3D-structure</keyword>
<keyword id="KW-0963">Cytoplasm</keyword>
<keyword id="KW-0903">Direct protein sequencing</keyword>
<keyword id="KW-0369">Histidine metabolism</keyword>
<keyword id="KW-0456">Lyase</keyword>
<keyword id="KW-0520">NAD</keyword>
<sequence length="557" mass="60804">MTDNNKYRDVEIRAPRGNKLTAKSWLTEAPLRMLMNNLDPQVAENPKELVVYGGIGRAARNWECYDKIVETLTRLEDDETLLVQSGKPVGVFKTHSNAPRVLIANSNLVPHWANWEHFNELDAKGLAMYGQMTAGSWIYIGSQGIVQGTYETFVEAGRQHYGGTVKAKWVLTAGLGGMGGAQPLAATLAGACSLNIECQQSRIDFRLETRYVDEQATDLDDALVRIAKYTAEGKAISIALHGNAAEILPELVKRGVRPDMVTDQTSAHDPLNGYLPAGWTWEQYRDRAQTEPAAVVKAAKQSMAVHVQAMLDFQKQGVPTFDYGNNIRQMAKEEGVANAFDFPGFVPAYIRPLFCRGVGPFRWAALSGEAEDIYKTDAKVKELIPDDAHLHRWLDMARERISFQGLPARICWVGLGLRAKLGLAFNEMVRSGELSAPVVIGRDHLDSGSVSSPNRETEAMRDGSDAVSDWPLLNALLNTAGGATWVSLHHGGGVGMGFSQHSGMVIVCDGTDEAAERIARVLTNDPGTGVMRHADAGYDIAIDCAKEQGLDLPMITG</sequence>
<gene>
    <name evidence="1 6" type="primary">hutU</name>
</gene>
<dbReference type="EC" id="4.2.1.49" evidence="1 5"/>
<dbReference type="EMBL" id="X58483">
    <property type="protein sequence ID" value="CAA41392.1"/>
    <property type="molecule type" value="Genomic_DNA"/>
</dbReference>
<dbReference type="EMBL" id="M33923">
    <property type="protein sequence ID" value="AAA50311.1"/>
    <property type="molecule type" value="Genomic_DNA"/>
</dbReference>
<dbReference type="PIR" id="S17184">
    <property type="entry name" value="DWPSUP"/>
</dbReference>
<dbReference type="PIR" id="T45008">
    <property type="entry name" value="T45008"/>
</dbReference>
<dbReference type="PDB" id="1UWK">
    <property type="method" value="X-ray"/>
    <property type="resolution" value="1.19 A"/>
    <property type="chains" value="A/B=1-557"/>
</dbReference>
<dbReference type="PDB" id="1UWL">
    <property type="method" value="X-ray"/>
    <property type="resolution" value="1.76 A"/>
    <property type="chains" value="A/B=1-557"/>
</dbReference>
<dbReference type="PDB" id="1W1U">
    <property type="method" value="X-ray"/>
    <property type="resolution" value="2.23 A"/>
    <property type="chains" value="A/B=2-557"/>
</dbReference>
<dbReference type="PDB" id="2V7G">
    <property type="method" value="X-ray"/>
    <property type="resolution" value="2.00 A"/>
    <property type="chains" value="A/B/C/D=2-557"/>
</dbReference>
<dbReference type="PDBsum" id="1UWK"/>
<dbReference type="PDBsum" id="1UWL"/>
<dbReference type="PDBsum" id="1W1U"/>
<dbReference type="PDBsum" id="2V7G"/>
<dbReference type="SMR" id="P25080"/>
<dbReference type="eggNOG" id="COG2987">
    <property type="taxonomic scope" value="Bacteria"/>
</dbReference>
<dbReference type="BioCyc" id="MetaCyc:MONOMER-11616"/>
<dbReference type="BRENDA" id="4.2.1.49">
    <property type="organism ID" value="5092"/>
</dbReference>
<dbReference type="UniPathway" id="UPA00379">
    <property type="reaction ID" value="UER00550"/>
</dbReference>
<dbReference type="EvolutionaryTrace" id="P25080"/>
<dbReference type="GO" id="GO:0005737">
    <property type="term" value="C:cytoplasm"/>
    <property type="evidence" value="ECO:0007669"/>
    <property type="project" value="UniProtKB-SubCell"/>
</dbReference>
<dbReference type="GO" id="GO:0016153">
    <property type="term" value="F:urocanate hydratase activity"/>
    <property type="evidence" value="ECO:0007669"/>
    <property type="project" value="UniProtKB-UniRule"/>
</dbReference>
<dbReference type="GO" id="GO:0019556">
    <property type="term" value="P:L-histidine catabolic process to glutamate and formamide"/>
    <property type="evidence" value="ECO:0007669"/>
    <property type="project" value="UniProtKB-UniPathway"/>
</dbReference>
<dbReference type="GO" id="GO:0019557">
    <property type="term" value="P:L-histidine catabolic process to glutamate and formate"/>
    <property type="evidence" value="ECO:0007669"/>
    <property type="project" value="UniProtKB-UniPathway"/>
</dbReference>
<dbReference type="FunFam" id="3.40.50.10730:FF:000001">
    <property type="entry name" value="Urocanate hydratase"/>
    <property type="match status" value="1"/>
</dbReference>
<dbReference type="Gene3D" id="3.40.50.10730">
    <property type="entry name" value="Urocanase like domains"/>
    <property type="match status" value="1"/>
</dbReference>
<dbReference type="Gene3D" id="3.40.1770.10">
    <property type="entry name" value="Urocanase superfamily"/>
    <property type="match status" value="1"/>
</dbReference>
<dbReference type="HAMAP" id="MF_00577">
    <property type="entry name" value="HutU"/>
    <property type="match status" value="1"/>
</dbReference>
<dbReference type="InterPro" id="IPR055351">
    <property type="entry name" value="Urocanase"/>
</dbReference>
<dbReference type="InterPro" id="IPR023637">
    <property type="entry name" value="Urocanase-like"/>
</dbReference>
<dbReference type="InterPro" id="IPR035401">
    <property type="entry name" value="Urocanase_C"/>
</dbReference>
<dbReference type="InterPro" id="IPR038364">
    <property type="entry name" value="Urocanase_central_sf"/>
</dbReference>
<dbReference type="InterPro" id="IPR023636">
    <property type="entry name" value="Urocanase_CS"/>
</dbReference>
<dbReference type="InterPro" id="IPR035400">
    <property type="entry name" value="Urocanase_N"/>
</dbReference>
<dbReference type="InterPro" id="IPR035085">
    <property type="entry name" value="Urocanase_Rossmann-like"/>
</dbReference>
<dbReference type="InterPro" id="IPR036190">
    <property type="entry name" value="Urocanase_sf"/>
</dbReference>
<dbReference type="NCBIfam" id="TIGR01228">
    <property type="entry name" value="hutU"/>
    <property type="match status" value="1"/>
</dbReference>
<dbReference type="NCBIfam" id="NF003820">
    <property type="entry name" value="PRK05414.1"/>
    <property type="match status" value="1"/>
</dbReference>
<dbReference type="PANTHER" id="PTHR12216">
    <property type="entry name" value="UROCANATE HYDRATASE"/>
    <property type="match status" value="1"/>
</dbReference>
<dbReference type="PANTHER" id="PTHR12216:SF4">
    <property type="entry name" value="UROCANATE HYDRATASE"/>
    <property type="match status" value="1"/>
</dbReference>
<dbReference type="Pfam" id="PF01175">
    <property type="entry name" value="Urocanase"/>
    <property type="match status" value="1"/>
</dbReference>
<dbReference type="Pfam" id="PF17392">
    <property type="entry name" value="Urocanase_C"/>
    <property type="match status" value="1"/>
</dbReference>
<dbReference type="Pfam" id="PF17391">
    <property type="entry name" value="Urocanase_N"/>
    <property type="match status" value="1"/>
</dbReference>
<dbReference type="PIRSF" id="PIRSF001423">
    <property type="entry name" value="Urocanate_hydrat"/>
    <property type="match status" value="1"/>
</dbReference>
<dbReference type="SUPFAM" id="SSF111326">
    <property type="entry name" value="Urocanase"/>
    <property type="match status" value="1"/>
</dbReference>
<dbReference type="PROSITE" id="PS01233">
    <property type="entry name" value="UROCANASE"/>
    <property type="match status" value="1"/>
</dbReference>
<name>HUTU_PSEPU</name>
<comment type="function">
    <text evidence="1 5">Catalyzes the conversion of urocanate to 4-imidazolone-5-propionate.</text>
</comment>
<comment type="catalytic activity">
    <reaction evidence="1 5">
        <text>4-imidazolone-5-propanoate = trans-urocanate + H2O</text>
        <dbReference type="Rhea" id="RHEA:13101"/>
        <dbReference type="ChEBI" id="CHEBI:15377"/>
        <dbReference type="ChEBI" id="CHEBI:17771"/>
        <dbReference type="ChEBI" id="CHEBI:77893"/>
        <dbReference type="EC" id="4.2.1.49"/>
    </reaction>
</comment>
<comment type="cofactor">
    <cofactor evidence="1 2 4 5">
        <name>NAD(+)</name>
        <dbReference type="ChEBI" id="CHEBI:57540"/>
    </cofactor>
    <text evidence="1 2 4">Binds 1 NAD(+) per subunit.</text>
</comment>
<comment type="biophysicochemical properties">
    <kinetics>
        <KM evidence="5">35.4 uM for urucanate</KM>
    </kinetics>
</comment>
<comment type="pathway">
    <text evidence="1">Amino-acid degradation; L-histidine degradation into L-glutamate; N-formimidoyl-L-glutamate from L-histidine: step 2/3.</text>
</comment>
<comment type="subunit">
    <text evidence="5">Homodimer.</text>
</comment>
<comment type="subcellular location">
    <subcellularLocation>
        <location evidence="1">Cytoplasm</location>
    </subcellularLocation>
</comment>
<comment type="mass spectrometry" mass="60686.0" error="15.0" method="Electrospray" evidence="5"/>
<comment type="similarity">
    <text evidence="1 7">Belongs to the urocanase family.</text>
</comment>
<evidence type="ECO:0000255" key="1">
    <source>
        <dbReference type="HAMAP-Rule" id="MF_00577"/>
    </source>
</evidence>
<evidence type="ECO:0000269" key="2">
    <source>
    </source>
</evidence>
<evidence type="ECO:0000269" key="3">
    <source>
    </source>
</evidence>
<evidence type="ECO:0000269" key="4">
    <source>
    </source>
</evidence>
<evidence type="ECO:0000269" key="5">
    <source>
    </source>
</evidence>
<evidence type="ECO:0000303" key="6">
    <source>
    </source>
</evidence>
<evidence type="ECO:0000305" key="7"/>
<evidence type="ECO:0000305" key="8">
    <source>
    </source>
</evidence>
<evidence type="ECO:0007744" key="9">
    <source>
        <dbReference type="PDB" id="1UWK"/>
    </source>
</evidence>
<evidence type="ECO:0007744" key="10">
    <source>
        <dbReference type="PDB" id="1UWL"/>
    </source>
</evidence>
<evidence type="ECO:0007744" key="11">
    <source>
        <dbReference type="PDB" id="1W1U"/>
    </source>
</evidence>
<evidence type="ECO:0007744" key="12">
    <source>
        <dbReference type="PDB" id="2V7G"/>
    </source>
</evidence>
<evidence type="ECO:0007829" key="13">
    <source>
        <dbReference type="PDB" id="1UWK"/>
    </source>
</evidence>
<organism>
    <name type="scientific">Pseudomonas putida</name>
    <name type="common">Arthrobacter siderocapsulatus</name>
    <dbReference type="NCBI Taxonomy" id="303"/>
    <lineage>
        <taxon>Bacteria</taxon>
        <taxon>Pseudomonadati</taxon>
        <taxon>Pseudomonadota</taxon>
        <taxon>Gammaproteobacteria</taxon>
        <taxon>Pseudomonadales</taxon>
        <taxon>Pseudomonadaceae</taxon>
        <taxon>Pseudomonas</taxon>
    </lineage>
</organism>
<protein>
    <recommendedName>
        <fullName evidence="1">Urocanate hydratase</fullName>
        <shortName evidence="1 6">Urocanase</shortName>
        <ecNumber evidence="1 5">4.2.1.49</ecNumber>
    </recommendedName>
    <alternativeName>
        <fullName evidence="1">Imidazolonepropionate hydrolase</fullName>
    </alternativeName>
</protein>
<reference key="1">
    <citation type="journal article" date="1991" name="FEBS Lett.">
        <title>Cloning and sequencing the urocanase gene (hutU) from Pseudomonas putida.</title>
        <authorList>
            <person name="Fessemaier M."/>
            <person name="Frank R."/>
            <person name="Retey J."/>
            <person name="Schubert C."/>
        </authorList>
    </citation>
    <scope>NUCLEOTIDE SEQUENCE [GENOMIC DNA]</scope>
    <scope>PROTEIN SEQUENCE OF 2-23</scope>
    <source>
        <strain>NIC II</strain>
    </source>
</reference>
<reference key="2">
    <citation type="submission" date="1993-11" db="EMBL/GenBank/DDBJ databases">
        <authorList>
            <person name="Allison S.L."/>
            <person name="Phillips A.T."/>
        </authorList>
    </citation>
    <scope>NUCLEOTIDE SEQUENCE [GENOMIC DNA]</scope>
    <source>
        <strain>ATCC 12633 / DSM 291 / JCM 13063 / CCUG 12690 / LMG 2257 / NBRC 14164 / NCIMB 9494 / NCTC 10936 / VKM B-2187 / Stanier 90</strain>
    </source>
</reference>
<reference key="3">
    <citation type="journal article" date="1993" name="Eur. J. Biochem.">
        <title>Cloning, expression and mutational analysis of the urocanase gene (hutU) from Pseudomonas putida.</title>
        <authorList>
            <person name="Lenz M."/>
            <person name="Retey J."/>
        </authorList>
    </citation>
    <scope>FUNCTION</scope>
    <scope>CATALYTIC ACTIVITY</scope>
    <scope>COFACTOR</scope>
    <scope>BIOPHYSICOCHEMICAL PROPERTIES</scope>
    <scope>SUBUNIT</scope>
    <scope>MASS SPECTROMETRY</scope>
    <scope>MUTAGENESIS OF CYS-64; CYS-192; CYS-198; CYS-355; CYS-411 AND CYS-544</scope>
    <scope>ACTIVE SITE</scope>
    <source>
        <strain>NIC II</strain>
    </source>
</reference>
<reference evidence="9 10 11" key="4">
    <citation type="journal article" date="2004" name="J. Mol. Biol.">
        <title>Structure and action of urocanase.</title>
        <authorList>
            <person name="Kessler D."/>
            <person name="Retey J."/>
            <person name="Schulz G.E."/>
        </authorList>
    </citation>
    <scope>X-RAY CRYSTALLOGRAPHY (1.19 ANGSTROMS) IN COMPLEX WITH NAD</scope>
    <scope>COFACTOR</scope>
</reference>
<reference evidence="12" key="5">
    <citation type="journal article" date="2008" name="Science">
        <title>Designed protein-protein association.</title>
        <authorList>
            <person name="Grueninger D."/>
            <person name="Treiber N."/>
            <person name="Ziegler M.O."/>
            <person name="Koetter J.W."/>
            <person name="Schulze M.S."/>
            <person name="Schulz G.E."/>
        </authorList>
    </citation>
    <scope>X-RAY CRYSTALLOGRAPHY (2.00 ANGSTROMS) IN COMPLEX WITH NAD</scope>
    <scope>COFACTOR</scope>
</reference>
<feature type="initiator methionine" description="Removed" evidence="3">
    <location>
        <position position="1"/>
    </location>
</feature>
<feature type="chain" id="PRO_0000207344" description="Urocanate hydratase">
    <location>
        <begin position="2"/>
        <end position="557"/>
    </location>
</feature>
<feature type="active site" evidence="1 8">
    <location>
        <position position="411"/>
    </location>
</feature>
<feature type="binding site" evidence="1 2 4 9 10 11 12">
    <location>
        <begin position="53"/>
        <end position="54"/>
    </location>
    <ligand>
        <name>NAD(+)</name>
        <dbReference type="ChEBI" id="CHEBI:57540"/>
    </ligand>
</feature>
<feature type="binding site" evidence="1 2 4 9 10 11 12">
    <location>
        <position position="131"/>
    </location>
    <ligand>
        <name>NAD(+)</name>
        <dbReference type="ChEBI" id="CHEBI:57540"/>
    </ligand>
</feature>
<feature type="binding site" evidence="1 2 4 9 10 11 12">
    <location>
        <begin position="177"/>
        <end position="179"/>
    </location>
    <ligand>
        <name>NAD(+)</name>
        <dbReference type="ChEBI" id="CHEBI:57540"/>
    </ligand>
</feature>
<feature type="binding site" evidence="2 4 9 10 11 12">
    <location>
        <begin position="197"/>
        <end position="202"/>
    </location>
    <ligand>
        <name>NAD(+)</name>
        <dbReference type="ChEBI" id="CHEBI:57540"/>
    </ligand>
</feature>
<feature type="binding site" evidence="1 2 4 9 10 11 12">
    <location>
        <begin position="243"/>
        <end position="244"/>
    </location>
    <ligand>
        <name>NAD(+)</name>
        <dbReference type="ChEBI" id="CHEBI:57540"/>
    </ligand>
</feature>
<feature type="binding site" evidence="1 2 4 9 10 11 12">
    <location>
        <begin position="264"/>
        <end position="268"/>
    </location>
    <ligand>
        <name>NAD(+)</name>
        <dbReference type="ChEBI" id="CHEBI:57540"/>
    </ligand>
</feature>
<feature type="binding site" evidence="1 2 4 9 10 11 12">
    <location>
        <begin position="274"/>
        <end position="275"/>
    </location>
    <ligand>
        <name>NAD(+)</name>
        <dbReference type="ChEBI" id="CHEBI:57540"/>
    </ligand>
</feature>
<feature type="binding site" evidence="2 4 9 10 12">
    <location>
        <begin position="323"/>
        <end position="324"/>
    </location>
    <ligand>
        <name>NAD(+)</name>
        <dbReference type="ChEBI" id="CHEBI:57540"/>
    </ligand>
</feature>
<feature type="binding site" evidence="2 4 11 12">
    <location>
        <begin position="455"/>
        <end position="456"/>
    </location>
    <ligand>
        <name>NAD(+)</name>
        <dbReference type="ChEBI" id="CHEBI:57540"/>
    </ligand>
</feature>
<feature type="binding site" evidence="1 2 4 9 10 11 12">
    <location>
        <position position="493"/>
    </location>
    <ligand>
        <name>NAD(+)</name>
        <dbReference type="ChEBI" id="CHEBI:57540"/>
    </ligand>
</feature>
<feature type="mutagenesis site" description="No loss of activity." evidence="5">
    <original>C</original>
    <variation>A</variation>
    <location>
        <position position="64"/>
    </location>
</feature>
<feature type="mutagenesis site" description="No loss of activity." evidence="5">
    <original>C</original>
    <variation>A</variation>
    <location>
        <position position="192"/>
    </location>
</feature>
<feature type="mutagenesis site" description="No loss of activity." evidence="5">
    <original>C</original>
    <variation>A</variation>
    <location>
        <position position="198"/>
    </location>
</feature>
<feature type="mutagenesis site" description="Minor loss in activity." evidence="5">
    <original>C</original>
    <variation>A</variation>
    <location>
        <position position="355"/>
    </location>
</feature>
<feature type="mutagenesis site" description="Loss of activity." evidence="5">
    <original>C</original>
    <variation>A</variation>
    <location>
        <position position="411"/>
    </location>
</feature>
<feature type="mutagenesis site" description="No loss of activity." evidence="5">
    <original>C</original>
    <variation>A</variation>
    <location>
        <position position="544"/>
    </location>
</feature>
<feature type="sequence conflict" description="In Ref. 2; AAA50311." evidence="7" ref="2">
    <original>TVKA</original>
    <variation>SLKG</variation>
    <location>
        <begin position="164"/>
        <end position="167"/>
    </location>
</feature>
<feature type="strand" evidence="13">
    <location>
        <begin position="21"/>
        <end position="24"/>
    </location>
</feature>
<feature type="helix" evidence="13">
    <location>
        <begin position="25"/>
        <end position="37"/>
    </location>
</feature>
<feature type="turn" evidence="13">
    <location>
        <begin position="40"/>
        <end position="42"/>
    </location>
</feature>
<feature type="helix" evidence="13">
    <location>
        <begin position="46"/>
        <end position="48"/>
    </location>
</feature>
<feature type="strand" evidence="13">
    <location>
        <begin position="50"/>
        <end position="52"/>
    </location>
</feature>
<feature type="turn" evidence="13">
    <location>
        <begin position="53"/>
        <end position="55"/>
    </location>
</feature>
<feature type="strand" evidence="13">
    <location>
        <begin position="56"/>
        <end position="61"/>
    </location>
</feature>
<feature type="helix" evidence="13">
    <location>
        <begin position="62"/>
        <end position="74"/>
    </location>
</feature>
<feature type="strand" evidence="13">
    <location>
        <begin position="79"/>
        <end position="84"/>
    </location>
</feature>
<feature type="strand" evidence="13">
    <location>
        <begin position="87"/>
        <end position="93"/>
    </location>
</feature>
<feature type="strand" evidence="13">
    <location>
        <begin position="100"/>
        <end position="106"/>
    </location>
</feature>
<feature type="helix" evidence="13">
    <location>
        <begin position="110"/>
        <end position="112"/>
    </location>
</feature>
<feature type="helix" evidence="13">
    <location>
        <begin position="115"/>
        <end position="123"/>
    </location>
</feature>
<feature type="turn" evidence="13">
    <location>
        <begin position="131"/>
        <end position="137"/>
    </location>
</feature>
<feature type="helix" evidence="13">
    <location>
        <begin position="143"/>
        <end position="160"/>
    </location>
</feature>
<feature type="strand" evidence="13">
    <location>
        <begin position="161"/>
        <end position="163"/>
    </location>
</feature>
<feature type="strand" evidence="13">
    <location>
        <begin position="169"/>
        <end position="173"/>
    </location>
</feature>
<feature type="turn" evidence="13">
    <location>
        <begin position="177"/>
        <end position="180"/>
    </location>
</feature>
<feature type="helix" evidence="13">
    <location>
        <begin position="181"/>
        <end position="188"/>
    </location>
</feature>
<feature type="strand" evidence="13">
    <location>
        <begin position="192"/>
        <end position="198"/>
    </location>
</feature>
<feature type="helix" evidence="13">
    <location>
        <begin position="200"/>
        <end position="208"/>
    </location>
</feature>
<feature type="helix" evidence="13">
    <location>
        <begin position="219"/>
        <end position="231"/>
    </location>
</feature>
<feature type="strand" evidence="13">
    <location>
        <begin position="237"/>
        <end position="242"/>
    </location>
</feature>
<feature type="helix" evidence="13">
    <location>
        <begin position="244"/>
        <end position="254"/>
    </location>
</feature>
<feature type="strand" evidence="13">
    <location>
        <begin position="259"/>
        <end position="261"/>
    </location>
</feature>
<feature type="turn" evidence="13">
    <location>
        <begin position="270"/>
        <end position="272"/>
    </location>
</feature>
<feature type="helix" evidence="13">
    <location>
        <begin position="281"/>
        <end position="290"/>
    </location>
</feature>
<feature type="helix" evidence="13">
    <location>
        <begin position="292"/>
        <end position="315"/>
    </location>
</feature>
<feature type="helix" evidence="13">
    <location>
        <begin position="327"/>
        <end position="333"/>
    </location>
</feature>
<feature type="helix" evidence="13">
    <location>
        <begin position="339"/>
        <end position="341"/>
    </location>
</feature>
<feature type="helix" evidence="13">
    <location>
        <begin position="345"/>
        <end position="348"/>
    </location>
</feature>
<feature type="helix" evidence="13">
    <location>
        <begin position="351"/>
        <end position="354"/>
    </location>
</feature>
<feature type="turn" evidence="13">
    <location>
        <begin position="355"/>
        <end position="357"/>
    </location>
</feature>
<feature type="strand" evidence="13">
    <location>
        <begin position="361"/>
        <end position="365"/>
    </location>
</feature>
<feature type="helix" evidence="13">
    <location>
        <begin position="370"/>
        <end position="383"/>
    </location>
</feature>
<feature type="helix" evidence="13">
    <location>
        <begin position="388"/>
        <end position="400"/>
    </location>
</feature>
<feature type="strand" evidence="13">
    <location>
        <begin position="408"/>
        <end position="410"/>
    </location>
</feature>
<feature type="helix" evidence="13">
    <location>
        <begin position="417"/>
        <end position="430"/>
    </location>
</feature>
<feature type="strand" evidence="13">
    <location>
        <begin position="433"/>
        <end position="436"/>
    </location>
</feature>
<feature type="strand" evidence="13">
    <location>
        <begin position="438"/>
        <end position="442"/>
    </location>
</feature>
<feature type="strand" evidence="13">
    <location>
        <begin position="449"/>
        <end position="451"/>
    </location>
</feature>
<feature type="turn" evidence="13">
    <location>
        <begin position="453"/>
        <end position="459"/>
    </location>
</feature>
<feature type="helix" evidence="13">
    <location>
        <begin position="469"/>
        <end position="481"/>
    </location>
</feature>
<feature type="strand" evidence="13">
    <location>
        <begin position="484"/>
        <end position="491"/>
    </location>
</feature>
<feature type="turn" evidence="13">
    <location>
        <begin position="492"/>
        <end position="494"/>
    </location>
</feature>
<feature type="strand" evidence="13">
    <location>
        <begin position="500"/>
        <end position="508"/>
    </location>
</feature>
<feature type="helix" evidence="13">
    <location>
        <begin position="512"/>
        <end position="535"/>
    </location>
</feature>
<feature type="helix" evidence="13">
    <location>
        <begin position="539"/>
        <end position="547"/>
    </location>
</feature>
<feature type="turn" evidence="13">
    <location>
        <begin position="553"/>
        <end position="555"/>
    </location>
</feature>
<proteinExistence type="evidence at protein level"/>